<feature type="chain" id="PRO_0000380506" description="DNA ligase">
    <location>
        <begin position="1"/>
        <end position="670"/>
    </location>
</feature>
<feature type="domain" description="BRCT" evidence="1">
    <location>
        <begin position="593"/>
        <end position="670"/>
    </location>
</feature>
<feature type="active site" description="N6-AMP-lysine intermediate" evidence="1">
    <location>
        <position position="116"/>
    </location>
</feature>
<feature type="binding site" evidence="1">
    <location>
        <begin position="33"/>
        <end position="37"/>
    </location>
    <ligand>
        <name>NAD(+)</name>
        <dbReference type="ChEBI" id="CHEBI:57540"/>
    </ligand>
</feature>
<feature type="binding site" evidence="1">
    <location>
        <begin position="82"/>
        <end position="83"/>
    </location>
    <ligand>
        <name>NAD(+)</name>
        <dbReference type="ChEBI" id="CHEBI:57540"/>
    </ligand>
</feature>
<feature type="binding site" evidence="1">
    <location>
        <position position="114"/>
    </location>
    <ligand>
        <name>NAD(+)</name>
        <dbReference type="ChEBI" id="CHEBI:57540"/>
    </ligand>
</feature>
<feature type="binding site" evidence="1">
    <location>
        <position position="137"/>
    </location>
    <ligand>
        <name>NAD(+)</name>
        <dbReference type="ChEBI" id="CHEBI:57540"/>
    </ligand>
</feature>
<feature type="binding site" evidence="1">
    <location>
        <position position="174"/>
    </location>
    <ligand>
        <name>NAD(+)</name>
        <dbReference type="ChEBI" id="CHEBI:57540"/>
    </ligand>
</feature>
<feature type="binding site" evidence="1">
    <location>
        <position position="291"/>
    </location>
    <ligand>
        <name>NAD(+)</name>
        <dbReference type="ChEBI" id="CHEBI:57540"/>
    </ligand>
</feature>
<feature type="binding site" evidence="1">
    <location>
        <position position="315"/>
    </location>
    <ligand>
        <name>NAD(+)</name>
        <dbReference type="ChEBI" id="CHEBI:57540"/>
    </ligand>
</feature>
<feature type="binding site" evidence="1">
    <location>
        <position position="409"/>
    </location>
    <ligand>
        <name>Zn(2+)</name>
        <dbReference type="ChEBI" id="CHEBI:29105"/>
    </ligand>
</feature>
<feature type="binding site" evidence="1">
    <location>
        <position position="412"/>
    </location>
    <ligand>
        <name>Zn(2+)</name>
        <dbReference type="ChEBI" id="CHEBI:29105"/>
    </ligand>
</feature>
<feature type="binding site" evidence="1">
    <location>
        <position position="427"/>
    </location>
    <ligand>
        <name>Zn(2+)</name>
        <dbReference type="ChEBI" id="CHEBI:29105"/>
    </ligand>
</feature>
<feature type="binding site" evidence="1">
    <location>
        <position position="433"/>
    </location>
    <ligand>
        <name>Zn(2+)</name>
        <dbReference type="ChEBI" id="CHEBI:29105"/>
    </ligand>
</feature>
<name>DNLJ_VIBA3</name>
<evidence type="ECO:0000255" key="1">
    <source>
        <dbReference type="HAMAP-Rule" id="MF_01588"/>
    </source>
</evidence>
<organism>
    <name type="scientific">Vibrio atlanticus (strain LGP32)</name>
    <name type="common">Vibrio splendidus (strain Mel32)</name>
    <dbReference type="NCBI Taxonomy" id="575788"/>
    <lineage>
        <taxon>Bacteria</taxon>
        <taxon>Pseudomonadati</taxon>
        <taxon>Pseudomonadota</taxon>
        <taxon>Gammaproteobacteria</taxon>
        <taxon>Vibrionales</taxon>
        <taxon>Vibrionaceae</taxon>
        <taxon>Vibrio</taxon>
    </lineage>
</organism>
<sequence length="670" mass="73181">MKESIQVTLEQLRETLHYHAVRYYVEDSPEIPDVEYDRLMQQLLKIEDENPELVTVDSPSQRVGGQPLDGFTQVTHEIPMLSLDNAFSDDDLDAFNKRMSDRAPTANLETFCCEPKLDGLAVSLLYVNGTLVQAATRGDGATGENITENVRTISSIPLKLQGEGWPERIEVRGEVFMPKAGFDKLNEMALKKGEKVFVNPRNAAAGSLRQLDSRITAKRPLAFYAYSVGVVQGAELSNSHYQRFLQLKAWGLPMCPETKQLSSLEDVKAYYQDIMTRRDTLAYEIDGVVIKVDDIAAQETLGFVARAPRWAIAYKFPAQEEITLLNDVEFQVGRTGAITPVAKLEPIFVGGVTVSNATLHNADEIARLGVKVGDSVIIRRAGDVIPQIVAVVQDRRPETAKDIVFPDACPVCNSAVERVEGEAVARCTGGLVCQAQRKEALKHFVSRKALDVDGLGVKVIEQLVDREMVETPADLFKLSAGVITVLDRMGPKSAQNVVSALNKAKDTTLARFLYSLGIREVGEATAMNLAQHFKTLELVQAATHEQLVEVSDIGDIVASHLTSFFSQEKNRAVVDQLIELGVNWPAIEAVADDQELPLEGKVVVLTGSLSKLGRSEAKAALQALGAKVTGSVSKKTDILFAGEAAGSKLTKAQDLGIEIRTEEDLIALIS</sequence>
<proteinExistence type="inferred from homology"/>
<comment type="function">
    <text evidence="1">DNA ligase that catalyzes the formation of phosphodiester linkages between 5'-phosphoryl and 3'-hydroxyl groups in double-stranded DNA using NAD as a coenzyme and as the energy source for the reaction. It is essential for DNA replication and repair of damaged DNA.</text>
</comment>
<comment type="catalytic activity">
    <reaction evidence="1">
        <text>NAD(+) + (deoxyribonucleotide)n-3'-hydroxyl + 5'-phospho-(deoxyribonucleotide)m = (deoxyribonucleotide)n+m + AMP + beta-nicotinamide D-nucleotide.</text>
        <dbReference type="EC" id="6.5.1.2"/>
    </reaction>
</comment>
<comment type="cofactor">
    <cofactor evidence="1">
        <name>Mg(2+)</name>
        <dbReference type="ChEBI" id="CHEBI:18420"/>
    </cofactor>
    <cofactor evidence="1">
        <name>Mn(2+)</name>
        <dbReference type="ChEBI" id="CHEBI:29035"/>
    </cofactor>
</comment>
<comment type="similarity">
    <text evidence="1">Belongs to the NAD-dependent DNA ligase family. LigA subfamily.</text>
</comment>
<protein>
    <recommendedName>
        <fullName evidence="1">DNA ligase</fullName>
        <ecNumber evidence="1">6.5.1.2</ecNumber>
    </recommendedName>
    <alternativeName>
        <fullName evidence="1">Polydeoxyribonucleotide synthase [NAD(+)]</fullName>
    </alternativeName>
</protein>
<accession>B7VIK3</accession>
<reference key="1">
    <citation type="submission" date="2009-02" db="EMBL/GenBank/DDBJ databases">
        <title>Vibrio splendidus str. LGP32 complete genome.</title>
        <authorList>
            <person name="Mazel D."/>
            <person name="Le Roux F."/>
        </authorList>
    </citation>
    <scope>NUCLEOTIDE SEQUENCE [LARGE SCALE GENOMIC DNA]</scope>
    <source>
        <strain>LGP32</strain>
    </source>
</reference>
<dbReference type="EC" id="6.5.1.2" evidence="1"/>
<dbReference type="EMBL" id="FM954972">
    <property type="protein sequence ID" value="CAV19449.1"/>
    <property type="molecule type" value="Genomic_DNA"/>
</dbReference>
<dbReference type="SMR" id="B7VIK3"/>
<dbReference type="STRING" id="575788.VS_2286"/>
<dbReference type="KEGG" id="vsp:VS_2286"/>
<dbReference type="PATRIC" id="fig|575788.5.peg.3548"/>
<dbReference type="eggNOG" id="COG0272">
    <property type="taxonomic scope" value="Bacteria"/>
</dbReference>
<dbReference type="HOGENOM" id="CLU_007764_2_1_6"/>
<dbReference type="Proteomes" id="UP000009100">
    <property type="component" value="Chromosome 1"/>
</dbReference>
<dbReference type="GO" id="GO:0005829">
    <property type="term" value="C:cytosol"/>
    <property type="evidence" value="ECO:0007669"/>
    <property type="project" value="TreeGrafter"/>
</dbReference>
<dbReference type="GO" id="GO:0003911">
    <property type="term" value="F:DNA ligase (NAD+) activity"/>
    <property type="evidence" value="ECO:0007669"/>
    <property type="project" value="UniProtKB-UniRule"/>
</dbReference>
<dbReference type="GO" id="GO:0046872">
    <property type="term" value="F:metal ion binding"/>
    <property type="evidence" value="ECO:0007669"/>
    <property type="project" value="UniProtKB-KW"/>
</dbReference>
<dbReference type="GO" id="GO:0006281">
    <property type="term" value="P:DNA repair"/>
    <property type="evidence" value="ECO:0007669"/>
    <property type="project" value="UniProtKB-KW"/>
</dbReference>
<dbReference type="GO" id="GO:0006260">
    <property type="term" value="P:DNA replication"/>
    <property type="evidence" value="ECO:0007669"/>
    <property type="project" value="UniProtKB-KW"/>
</dbReference>
<dbReference type="CDD" id="cd17748">
    <property type="entry name" value="BRCT_DNA_ligase_like"/>
    <property type="match status" value="1"/>
</dbReference>
<dbReference type="CDD" id="cd00114">
    <property type="entry name" value="LIGANc"/>
    <property type="match status" value="1"/>
</dbReference>
<dbReference type="FunFam" id="1.10.150.20:FF:000006">
    <property type="entry name" value="DNA ligase"/>
    <property type="match status" value="1"/>
</dbReference>
<dbReference type="FunFam" id="1.10.150.20:FF:000007">
    <property type="entry name" value="DNA ligase"/>
    <property type="match status" value="1"/>
</dbReference>
<dbReference type="FunFam" id="1.10.287.610:FF:000002">
    <property type="entry name" value="DNA ligase"/>
    <property type="match status" value="1"/>
</dbReference>
<dbReference type="FunFam" id="2.40.50.140:FF:000012">
    <property type="entry name" value="DNA ligase"/>
    <property type="match status" value="1"/>
</dbReference>
<dbReference type="FunFam" id="3.30.470.30:FF:000001">
    <property type="entry name" value="DNA ligase"/>
    <property type="match status" value="1"/>
</dbReference>
<dbReference type="FunFam" id="6.20.10.30:FF:000001">
    <property type="entry name" value="DNA ligase"/>
    <property type="match status" value="1"/>
</dbReference>
<dbReference type="Gene3D" id="6.20.10.30">
    <property type="match status" value="1"/>
</dbReference>
<dbReference type="Gene3D" id="1.10.150.20">
    <property type="entry name" value="5' to 3' exonuclease, C-terminal subdomain"/>
    <property type="match status" value="2"/>
</dbReference>
<dbReference type="Gene3D" id="3.40.50.10190">
    <property type="entry name" value="BRCT domain"/>
    <property type="match status" value="1"/>
</dbReference>
<dbReference type="Gene3D" id="3.30.470.30">
    <property type="entry name" value="DNA ligase/mRNA capping enzyme"/>
    <property type="match status" value="1"/>
</dbReference>
<dbReference type="Gene3D" id="1.10.287.610">
    <property type="entry name" value="Helix hairpin bin"/>
    <property type="match status" value="1"/>
</dbReference>
<dbReference type="Gene3D" id="2.40.50.140">
    <property type="entry name" value="Nucleic acid-binding proteins"/>
    <property type="match status" value="1"/>
</dbReference>
<dbReference type="HAMAP" id="MF_01588">
    <property type="entry name" value="DNA_ligase_A"/>
    <property type="match status" value="1"/>
</dbReference>
<dbReference type="InterPro" id="IPR001357">
    <property type="entry name" value="BRCT_dom"/>
</dbReference>
<dbReference type="InterPro" id="IPR036420">
    <property type="entry name" value="BRCT_dom_sf"/>
</dbReference>
<dbReference type="InterPro" id="IPR041663">
    <property type="entry name" value="DisA/LigA_HHH"/>
</dbReference>
<dbReference type="InterPro" id="IPR001679">
    <property type="entry name" value="DNA_ligase"/>
</dbReference>
<dbReference type="InterPro" id="IPR018239">
    <property type="entry name" value="DNA_ligase_AS"/>
</dbReference>
<dbReference type="InterPro" id="IPR033136">
    <property type="entry name" value="DNA_ligase_CS"/>
</dbReference>
<dbReference type="InterPro" id="IPR013839">
    <property type="entry name" value="DNAligase_adenylation"/>
</dbReference>
<dbReference type="InterPro" id="IPR013840">
    <property type="entry name" value="DNAligase_N"/>
</dbReference>
<dbReference type="InterPro" id="IPR012340">
    <property type="entry name" value="NA-bd_OB-fold"/>
</dbReference>
<dbReference type="InterPro" id="IPR004150">
    <property type="entry name" value="NAD_DNA_ligase_OB"/>
</dbReference>
<dbReference type="InterPro" id="IPR010994">
    <property type="entry name" value="RuvA_2-like"/>
</dbReference>
<dbReference type="InterPro" id="IPR004149">
    <property type="entry name" value="Znf_DNAligase_C4"/>
</dbReference>
<dbReference type="NCBIfam" id="TIGR00575">
    <property type="entry name" value="dnlj"/>
    <property type="match status" value="1"/>
</dbReference>
<dbReference type="NCBIfam" id="NF005932">
    <property type="entry name" value="PRK07956.1"/>
    <property type="match status" value="1"/>
</dbReference>
<dbReference type="PANTHER" id="PTHR23389">
    <property type="entry name" value="CHROMOSOME TRANSMISSION FIDELITY FACTOR 18"/>
    <property type="match status" value="1"/>
</dbReference>
<dbReference type="PANTHER" id="PTHR23389:SF9">
    <property type="entry name" value="DNA LIGASE"/>
    <property type="match status" value="1"/>
</dbReference>
<dbReference type="Pfam" id="PF00533">
    <property type="entry name" value="BRCT"/>
    <property type="match status" value="1"/>
</dbReference>
<dbReference type="Pfam" id="PF01653">
    <property type="entry name" value="DNA_ligase_aden"/>
    <property type="match status" value="1"/>
</dbReference>
<dbReference type="Pfam" id="PF03120">
    <property type="entry name" value="DNA_ligase_OB"/>
    <property type="match status" value="1"/>
</dbReference>
<dbReference type="Pfam" id="PF03119">
    <property type="entry name" value="DNA_ligase_ZBD"/>
    <property type="match status" value="1"/>
</dbReference>
<dbReference type="Pfam" id="PF12826">
    <property type="entry name" value="HHH_2"/>
    <property type="match status" value="1"/>
</dbReference>
<dbReference type="Pfam" id="PF14520">
    <property type="entry name" value="HHH_5"/>
    <property type="match status" value="1"/>
</dbReference>
<dbReference type="Pfam" id="PF22745">
    <property type="entry name" value="Nlig-Ia"/>
    <property type="match status" value="1"/>
</dbReference>
<dbReference type="PIRSF" id="PIRSF001604">
    <property type="entry name" value="LigA"/>
    <property type="match status" value="1"/>
</dbReference>
<dbReference type="SMART" id="SM00292">
    <property type="entry name" value="BRCT"/>
    <property type="match status" value="1"/>
</dbReference>
<dbReference type="SMART" id="SM00532">
    <property type="entry name" value="LIGANc"/>
    <property type="match status" value="1"/>
</dbReference>
<dbReference type="SUPFAM" id="SSF52113">
    <property type="entry name" value="BRCT domain"/>
    <property type="match status" value="1"/>
</dbReference>
<dbReference type="SUPFAM" id="SSF56091">
    <property type="entry name" value="DNA ligase/mRNA capping enzyme, catalytic domain"/>
    <property type="match status" value="1"/>
</dbReference>
<dbReference type="SUPFAM" id="SSF50249">
    <property type="entry name" value="Nucleic acid-binding proteins"/>
    <property type="match status" value="1"/>
</dbReference>
<dbReference type="SUPFAM" id="SSF47781">
    <property type="entry name" value="RuvA domain 2-like"/>
    <property type="match status" value="1"/>
</dbReference>
<dbReference type="PROSITE" id="PS50172">
    <property type="entry name" value="BRCT"/>
    <property type="match status" value="1"/>
</dbReference>
<dbReference type="PROSITE" id="PS01055">
    <property type="entry name" value="DNA_LIGASE_N1"/>
    <property type="match status" value="1"/>
</dbReference>
<dbReference type="PROSITE" id="PS01056">
    <property type="entry name" value="DNA_LIGASE_N2"/>
    <property type="match status" value="1"/>
</dbReference>
<keyword id="KW-0227">DNA damage</keyword>
<keyword id="KW-0234">DNA repair</keyword>
<keyword id="KW-0235">DNA replication</keyword>
<keyword id="KW-0436">Ligase</keyword>
<keyword id="KW-0460">Magnesium</keyword>
<keyword id="KW-0464">Manganese</keyword>
<keyword id="KW-0479">Metal-binding</keyword>
<keyword id="KW-0520">NAD</keyword>
<keyword id="KW-0862">Zinc</keyword>
<gene>
    <name evidence="1" type="primary">ligA</name>
    <name type="ordered locus">VS_2286</name>
</gene>